<proteinExistence type="inferred from homology"/>
<name>URED_PROMS</name>
<dbReference type="EMBL" id="CP000551">
    <property type="protein sequence ID" value="ABM70176.1"/>
    <property type="molecule type" value="Genomic_DNA"/>
</dbReference>
<dbReference type="RefSeq" id="WP_011818333.1">
    <property type="nucleotide sequence ID" value="NC_008816.1"/>
</dbReference>
<dbReference type="SMR" id="A2BQW5"/>
<dbReference type="STRING" id="146891.A9601_08921"/>
<dbReference type="KEGG" id="pmb:A9601_08921"/>
<dbReference type="eggNOG" id="COG0829">
    <property type="taxonomic scope" value="Bacteria"/>
</dbReference>
<dbReference type="HOGENOM" id="CLU_056339_4_0_3"/>
<dbReference type="OrthoDB" id="9798842at2"/>
<dbReference type="Proteomes" id="UP000002590">
    <property type="component" value="Chromosome"/>
</dbReference>
<dbReference type="GO" id="GO:0005737">
    <property type="term" value="C:cytoplasm"/>
    <property type="evidence" value="ECO:0007669"/>
    <property type="project" value="UniProtKB-SubCell"/>
</dbReference>
<dbReference type="GO" id="GO:0016151">
    <property type="term" value="F:nickel cation binding"/>
    <property type="evidence" value="ECO:0007669"/>
    <property type="project" value="UniProtKB-UniRule"/>
</dbReference>
<dbReference type="HAMAP" id="MF_01384">
    <property type="entry name" value="UreD"/>
    <property type="match status" value="1"/>
</dbReference>
<dbReference type="InterPro" id="IPR002669">
    <property type="entry name" value="UreD"/>
</dbReference>
<dbReference type="PANTHER" id="PTHR33643">
    <property type="entry name" value="UREASE ACCESSORY PROTEIN D"/>
    <property type="match status" value="1"/>
</dbReference>
<dbReference type="PANTHER" id="PTHR33643:SF1">
    <property type="entry name" value="UREASE ACCESSORY PROTEIN D"/>
    <property type="match status" value="1"/>
</dbReference>
<dbReference type="Pfam" id="PF01774">
    <property type="entry name" value="UreD"/>
    <property type="match status" value="1"/>
</dbReference>
<keyword id="KW-0143">Chaperone</keyword>
<keyword id="KW-0963">Cytoplasm</keyword>
<keyword id="KW-0996">Nickel insertion</keyword>
<accession>A2BQW5</accession>
<comment type="function">
    <text evidence="1">Required for maturation of urease via the functional incorporation of the urease nickel metallocenter.</text>
</comment>
<comment type="subunit">
    <text evidence="1">UreD, UreF and UreG form a complex that acts as a GTP-hydrolysis-dependent molecular chaperone, activating the urease apoprotein by helping to assemble the nickel containing metallocenter of UreC. The UreE protein probably delivers the nickel.</text>
</comment>
<comment type="subcellular location">
    <subcellularLocation>
        <location evidence="1">Cytoplasm</location>
    </subcellularLocation>
</comment>
<comment type="similarity">
    <text evidence="1">Belongs to the UreD family.</text>
</comment>
<evidence type="ECO:0000255" key="1">
    <source>
        <dbReference type="HAMAP-Rule" id="MF_01384"/>
    </source>
</evidence>
<gene>
    <name evidence="1" type="primary">ureD</name>
    <name type="ordered locus">A9601_08921</name>
</gene>
<protein>
    <recommendedName>
        <fullName evidence="1">Urease accessory protein UreD</fullName>
    </recommendedName>
</protein>
<feature type="chain" id="PRO_0000340474" description="Urease accessory protein UreD">
    <location>
        <begin position="1"/>
        <end position="300"/>
    </location>
</feature>
<organism>
    <name type="scientific">Prochlorococcus marinus (strain AS9601)</name>
    <dbReference type="NCBI Taxonomy" id="146891"/>
    <lineage>
        <taxon>Bacteria</taxon>
        <taxon>Bacillati</taxon>
        <taxon>Cyanobacteriota</taxon>
        <taxon>Cyanophyceae</taxon>
        <taxon>Synechococcales</taxon>
        <taxon>Prochlorococcaceae</taxon>
        <taxon>Prochlorococcus</taxon>
    </lineage>
</organism>
<reference key="1">
    <citation type="journal article" date="2007" name="PLoS Genet.">
        <title>Patterns and implications of gene gain and loss in the evolution of Prochlorococcus.</title>
        <authorList>
            <person name="Kettler G.C."/>
            <person name="Martiny A.C."/>
            <person name="Huang K."/>
            <person name="Zucker J."/>
            <person name="Coleman M.L."/>
            <person name="Rodrigue S."/>
            <person name="Chen F."/>
            <person name="Lapidus A."/>
            <person name="Ferriera S."/>
            <person name="Johnson J."/>
            <person name="Steglich C."/>
            <person name="Church G.M."/>
            <person name="Richardson P."/>
            <person name="Chisholm S.W."/>
        </authorList>
    </citation>
    <scope>NUCLEOTIDE SEQUENCE [LARGE SCALE GENOMIC DNA]</scope>
    <source>
        <strain>AS9601</strain>
    </source>
</reference>
<sequence length="300" mass="33882">MIKTSWEGNCFLNFFNNKVSLGNVDKTIFKSKSTSPYKLLKSTHDQEGRCILPVLHTAGGLVGGDLLVFEVNLEKNSKVLLTTSSAQKVYGSVGISKINPKGSFSKQKNLINILDNSHLEYLPQETIIFANGLYEQIFKVSISETSSFLFTDLIRLGRSSSGESIESGVFRSRLEIIRNNDLLDDWEYVDQIELSKASFVAKSGMDYMPVFGSLIWICEKDFSKSKINNLVRKIKKIFNKTNNNLSIGILENGISVRFLGSSSQDARKCFFRIWKQIRSVSGFCEPKYQGVWPLQDSMNY</sequence>